<reference key="1">
    <citation type="journal article" date="2010" name="Genome Biol. Evol.">
        <title>Continuing evolution of Burkholderia mallei through genome reduction and large-scale rearrangements.</title>
        <authorList>
            <person name="Losada L."/>
            <person name="Ronning C.M."/>
            <person name="DeShazer D."/>
            <person name="Woods D."/>
            <person name="Fedorova N."/>
            <person name="Kim H.S."/>
            <person name="Shabalina S.A."/>
            <person name="Pearson T.R."/>
            <person name="Brinkac L."/>
            <person name="Tan P."/>
            <person name="Nandi T."/>
            <person name="Crabtree J."/>
            <person name="Badger J."/>
            <person name="Beckstrom-Sternberg S."/>
            <person name="Saqib M."/>
            <person name="Schutzer S.E."/>
            <person name="Keim P."/>
            <person name="Nierman W.C."/>
        </authorList>
    </citation>
    <scope>NUCLEOTIDE SEQUENCE [LARGE SCALE GENOMIC DNA]</scope>
    <source>
        <strain>1710b</strain>
    </source>
</reference>
<feature type="chain" id="PRO_1000056232" description="Ubiquinone/menaquinone biosynthesis C-methyltransferase UbiE">
    <location>
        <begin position="1"/>
        <end position="243"/>
    </location>
</feature>
<feature type="binding site" evidence="1">
    <location>
        <position position="69"/>
    </location>
    <ligand>
        <name>S-adenosyl-L-methionine</name>
        <dbReference type="ChEBI" id="CHEBI:59789"/>
    </ligand>
</feature>
<feature type="binding site" evidence="1">
    <location>
        <position position="90"/>
    </location>
    <ligand>
        <name>S-adenosyl-L-methionine</name>
        <dbReference type="ChEBI" id="CHEBI:59789"/>
    </ligand>
</feature>
<feature type="binding site" evidence="1">
    <location>
        <begin position="116"/>
        <end position="117"/>
    </location>
    <ligand>
        <name>S-adenosyl-L-methionine</name>
        <dbReference type="ChEBI" id="CHEBI:59789"/>
    </ligand>
</feature>
<keyword id="KW-0474">Menaquinone biosynthesis</keyword>
<keyword id="KW-0489">Methyltransferase</keyword>
<keyword id="KW-0949">S-adenosyl-L-methionine</keyword>
<keyword id="KW-0808">Transferase</keyword>
<keyword id="KW-0831">Ubiquinone biosynthesis</keyword>
<proteinExistence type="inferred from homology"/>
<protein>
    <recommendedName>
        <fullName evidence="1">Ubiquinone/menaquinone biosynthesis C-methyltransferase UbiE</fullName>
        <ecNumber evidence="1">2.1.1.163</ecNumber>
        <ecNumber evidence="1">2.1.1.201</ecNumber>
    </recommendedName>
    <alternativeName>
        <fullName evidence="1">2-methoxy-6-polyprenyl-1,4-benzoquinol methylase</fullName>
    </alternativeName>
    <alternativeName>
        <fullName evidence="1">Demethylmenaquinone methyltransferase</fullName>
    </alternativeName>
</protein>
<name>UBIE_BURP1</name>
<dbReference type="EC" id="2.1.1.163" evidence="1"/>
<dbReference type="EC" id="2.1.1.201" evidence="1"/>
<dbReference type="EMBL" id="CP000124">
    <property type="protein sequence ID" value="ABA50884.1"/>
    <property type="molecule type" value="Genomic_DNA"/>
</dbReference>
<dbReference type="RefSeq" id="WP_004189973.1">
    <property type="nucleotide sequence ID" value="NC_007434.1"/>
</dbReference>
<dbReference type="SMR" id="Q3JVZ6"/>
<dbReference type="EnsemblBacteria" id="ABA50884">
    <property type="protein sequence ID" value="ABA50884"/>
    <property type="gene ID" value="BURPS1710b_0844"/>
</dbReference>
<dbReference type="GeneID" id="93059149"/>
<dbReference type="KEGG" id="bpm:BURPS1710b_0844"/>
<dbReference type="HOGENOM" id="CLU_037990_0_0_4"/>
<dbReference type="UniPathway" id="UPA00079">
    <property type="reaction ID" value="UER00169"/>
</dbReference>
<dbReference type="UniPathway" id="UPA00232"/>
<dbReference type="Proteomes" id="UP000002700">
    <property type="component" value="Chromosome I"/>
</dbReference>
<dbReference type="GO" id="GO:0008425">
    <property type="term" value="F:2-methoxy-6-polyprenyl-1,4-benzoquinol methyltransferase activity"/>
    <property type="evidence" value="ECO:0007669"/>
    <property type="project" value="UniProtKB-UniRule"/>
</dbReference>
<dbReference type="GO" id="GO:0043770">
    <property type="term" value="F:demethylmenaquinone methyltransferase activity"/>
    <property type="evidence" value="ECO:0007669"/>
    <property type="project" value="UniProtKB-UniRule"/>
</dbReference>
<dbReference type="GO" id="GO:0009060">
    <property type="term" value="P:aerobic respiration"/>
    <property type="evidence" value="ECO:0007669"/>
    <property type="project" value="UniProtKB-UniRule"/>
</dbReference>
<dbReference type="GO" id="GO:0009234">
    <property type="term" value="P:menaquinone biosynthetic process"/>
    <property type="evidence" value="ECO:0007669"/>
    <property type="project" value="UniProtKB-UniRule"/>
</dbReference>
<dbReference type="GO" id="GO:0032259">
    <property type="term" value="P:methylation"/>
    <property type="evidence" value="ECO:0007669"/>
    <property type="project" value="UniProtKB-KW"/>
</dbReference>
<dbReference type="CDD" id="cd02440">
    <property type="entry name" value="AdoMet_MTases"/>
    <property type="match status" value="1"/>
</dbReference>
<dbReference type="Gene3D" id="3.40.50.150">
    <property type="entry name" value="Vaccinia Virus protein VP39"/>
    <property type="match status" value="1"/>
</dbReference>
<dbReference type="HAMAP" id="MF_01813">
    <property type="entry name" value="MenG_UbiE_methyltr"/>
    <property type="match status" value="1"/>
</dbReference>
<dbReference type="InterPro" id="IPR029063">
    <property type="entry name" value="SAM-dependent_MTases_sf"/>
</dbReference>
<dbReference type="InterPro" id="IPR004033">
    <property type="entry name" value="UbiE/COQ5_MeTrFase"/>
</dbReference>
<dbReference type="InterPro" id="IPR023576">
    <property type="entry name" value="UbiE/COQ5_MeTrFase_CS"/>
</dbReference>
<dbReference type="NCBIfam" id="TIGR01934">
    <property type="entry name" value="MenG_MenH_UbiE"/>
    <property type="match status" value="1"/>
</dbReference>
<dbReference type="NCBIfam" id="NF001240">
    <property type="entry name" value="PRK00216.1-1"/>
    <property type="match status" value="1"/>
</dbReference>
<dbReference type="NCBIfam" id="NF001244">
    <property type="entry name" value="PRK00216.1-5"/>
    <property type="match status" value="1"/>
</dbReference>
<dbReference type="PANTHER" id="PTHR43591:SF24">
    <property type="entry name" value="2-METHOXY-6-POLYPRENYL-1,4-BENZOQUINOL METHYLASE, MITOCHONDRIAL"/>
    <property type="match status" value="1"/>
</dbReference>
<dbReference type="PANTHER" id="PTHR43591">
    <property type="entry name" value="METHYLTRANSFERASE"/>
    <property type="match status" value="1"/>
</dbReference>
<dbReference type="Pfam" id="PF01209">
    <property type="entry name" value="Ubie_methyltran"/>
    <property type="match status" value="1"/>
</dbReference>
<dbReference type="SUPFAM" id="SSF53335">
    <property type="entry name" value="S-adenosyl-L-methionine-dependent methyltransferases"/>
    <property type="match status" value="1"/>
</dbReference>
<dbReference type="PROSITE" id="PS51608">
    <property type="entry name" value="SAM_MT_UBIE"/>
    <property type="match status" value="1"/>
</dbReference>
<dbReference type="PROSITE" id="PS01183">
    <property type="entry name" value="UBIE_1"/>
    <property type="match status" value="1"/>
</dbReference>
<gene>
    <name evidence="1" type="primary">ubiE</name>
    <name type="ordered locus">BURPS1710b_0844</name>
</gene>
<comment type="function">
    <text evidence="1">Methyltransferase required for the conversion of demethylmenaquinol (DMKH2) to menaquinol (MKH2) and the conversion of 2-polyprenyl-6-methoxy-1,4-benzoquinol (DDMQH2) to 2-polyprenyl-3-methyl-6-methoxy-1,4-benzoquinol (DMQH2).</text>
</comment>
<comment type="catalytic activity">
    <reaction evidence="1">
        <text>a 2-demethylmenaquinol + S-adenosyl-L-methionine = a menaquinol + S-adenosyl-L-homocysteine + H(+)</text>
        <dbReference type="Rhea" id="RHEA:42640"/>
        <dbReference type="Rhea" id="RHEA-COMP:9539"/>
        <dbReference type="Rhea" id="RHEA-COMP:9563"/>
        <dbReference type="ChEBI" id="CHEBI:15378"/>
        <dbReference type="ChEBI" id="CHEBI:18151"/>
        <dbReference type="ChEBI" id="CHEBI:55437"/>
        <dbReference type="ChEBI" id="CHEBI:57856"/>
        <dbReference type="ChEBI" id="CHEBI:59789"/>
        <dbReference type="EC" id="2.1.1.163"/>
    </reaction>
</comment>
<comment type="catalytic activity">
    <reaction evidence="1">
        <text>a 2-methoxy-6-(all-trans-polyprenyl)benzene-1,4-diol + S-adenosyl-L-methionine = a 5-methoxy-2-methyl-3-(all-trans-polyprenyl)benzene-1,4-diol + S-adenosyl-L-homocysteine + H(+)</text>
        <dbReference type="Rhea" id="RHEA:28286"/>
        <dbReference type="Rhea" id="RHEA-COMP:10858"/>
        <dbReference type="Rhea" id="RHEA-COMP:10859"/>
        <dbReference type="ChEBI" id="CHEBI:15378"/>
        <dbReference type="ChEBI" id="CHEBI:57856"/>
        <dbReference type="ChEBI" id="CHEBI:59789"/>
        <dbReference type="ChEBI" id="CHEBI:84166"/>
        <dbReference type="ChEBI" id="CHEBI:84167"/>
        <dbReference type="EC" id="2.1.1.201"/>
    </reaction>
</comment>
<comment type="pathway">
    <text evidence="1">Quinol/quinone metabolism; menaquinone biosynthesis; menaquinol from 1,4-dihydroxy-2-naphthoate: step 2/2.</text>
</comment>
<comment type="pathway">
    <text evidence="1">Cofactor biosynthesis; ubiquinone biosynthesis.</text>
</comment>
<comment type="similarity">
    <text evidence="1">Belongs to the class I-like SAM-binding methyltransferase superfamily. MenG/UbiE family.</text>
</comment>
<accession>Q3JVZ6</accession>
<sequence length="243" mass="26955">MSKTHFGFETVEENEKAKKVAGVFHSVASNYDLMNDLMSAGLHRAWKAFTIAQANVRPGGKVLDIAAGTGDLTKAFAKAAGPTGEVWHTDINESMLRVGRDRLLDKGVVTPSLLCDAEKLPFPDNYFDVVTVAFGLRNMTHKDSALAEMRRVAKPGGRVMVLEFSKVWEPLKKAYDVYSFKVLPWLGDKFAKDADSYRYLAESIRMHPDQETLKTMMEQAGLDAVKYYNLSGGVVALHVGTKY</sequence>
<evidence type="ECO:0000255" key="1">
    <source>
        <dbReference type="HAMAP-Rule" id="MF_01813"/>
    </source>
</evidence>
<organism>
    <name type="scientific">Burkholderia pseudomallei (strain 1710b)</name>
    <dbReference type="NCBI Taxonomy" id="320372"/>
    <lineage>
        <taxon>Bacteria</taxon>
        <taxon>Pseudomonadati</taxon>
        <taxon>Pseudomonadota</taxon>
        <taxon>Betaproteobacteria</taxon>
        <taxon>Burkholderiales</taxon>
        <taxon>Burkholderiaceae</taxon>
        <taxon>Burkholderia</taxon>
        <taxon>pseudomallei group</taxon>
    </lineage>
</organism>